<accession>P44250</accession>
<sequence length="416" mass="46229">MNTPFFISWRYQRGKQKNPLVALIAKFSAIGIALGVAVLIVGLSAMNGFERELNQRILAVVPHAEILSAPNATEPTIHHWQNLEKRLQQNPQIKGISPFVSFTALVENGSKLKVVQVKGVEKQAEDKVSSIGNFVQEQGWNKFEKEGGLVLGSGIAKELDVKVGDWITLLISQQNGDEQFAQPTREPVQVTSILRLDGQLDYSYALLPLAQAQTFLTYQPDQITGVELKLDDPFSARNLDLSMLNDYPQMLYMQNWISKFGYMYRDIQLIRTVMYIAMVLVIGVACFNIVSTLIMAVKDKQGDIAIMRTLGANNAFIKRIFIWYGLQAGMKGCLIGIVLGIILALNLTTFIQGIEWVIGKKLLSGDVYFVDFLPSELHWLDVLMVLVAALALSLMASLYPASRAAKLQPAQVLSSH</sequence>
<dbReference type="EMBL" id="L42023">
    <property type="protein sequence ID" value="AAC23198.1"/>
    <property type="molecule type" value="Genomic_DNA"/>
</dbReference>
<dbReference type="PIR" id="H64035">
    <property type="entry name" value="H64035"/>
</dbReference>
<dbReference type="RefSeq" id="NP_439697.1">
    <property type="nucleotide sequence ID" value="NC_000907.1"/>
</dbReference>
<dbReference type="SMR" id="P44250"/>
<dbReference type="STRING" id="71421.HI_1548"/>
<dbReference type="EnsemblBacteria" id="AAC23198">
    <property type="protein sequence ID" value="AAC23198"/>
    <property type="gene ID" value="HI_1548"/>
</dbReference>
<dbReference type="KEGG" id="hin:HI_1548"/>
<dbReference type="PATRIC" id="fig|71421.8.peg.1619"/>
<dbReference type="eggNOG" id="COG4591">
    <property type="taxonomic scope" value="Bacteria"/>
</dbReference>
<dbReference type="HOGENOM" id="CLU_000604_8_1_6"/>
<dbReference type="OrthoDB" id="9808461at2"/>
<dbReference type="PhylomeDB" id="P44250"/>
<dbReference type="BioCyc" id="HINF71421:G1GJ1-1568-MONOMER"/>
<dbReference type="Proteomes" id="UP000000579">
    <property type="component" value="Chromosome"/>
</dbReference>
<dbReference type="GO" id="GO:0098797">
    <property type="term" value="C:plasma membrane protein complex"/>
    <property type="evidence" value="ECO:0000318"/>
    <property type="project" value="GO_Central"/>
</dbReference>
<dbReference type="GO" id="GO:0044874">
    <property type="term" value="P:lipoprotein localization to outer membrane"/>
    <property type="evidence" value="ECO:0000318"/>
    <property type="project" value="GO_Central"/>
</dbReference>
<dbReference type="GO" id="GO:0042953">
    <property type="term" value="P:lipoprotein transport"/>
    <property type="evidence" value="ECO:0007669"/>
    <property type="project" value="InterPro"/>
</dbReference>
<dbReference type="InterPro" id="IPR003838">
    <property type="entry name" value="ABC3_permease_C"/>
</dbReference>
<dbReference type="InterPro" id="IPR051447">
    <property type="entry name" value="Lipoprotein-release_system"/>
</dbReference>
<dbReference type="InterPro" id="IPR011925">
    <property type="entry name" value="LolCE_TM"/>
</dbReference>
<dbReference type="InterPro" id="IPR011926">
    <property type="entry name" value="LolE_gammaproteobact"/>
</dbReference>
<dbReference type="InterPro" id="IPR025857">
    <property type="entry name" value="MacB_PCD"/>
</dbReference>
<dbReference type="NCBIfam" id="TIGR02212">
    <property type="entry name" value="lolCE"/>
    <property type="match status" value="1"/>
</dbReference>
<dbReference type="NCBIfam" id="TIGR02213">
    <property type="entry name" value="lolE_release"/>
    <property type="match status" value="1"/>
</dbReference>
<dbReference type="NCBIfam" id="NF008357">
    <property type="entry name" value="PRK11146.1"/>
    <property type="match status" value="1"/>
</dbReference>
<dbReference type="PANTHER" id="PTHR30489">
    <property type="entry name" value="LIPOPROTEIN-RELEASING SYSTEM TRANSMEMBRANE PROTEIN LOLE"/>
    <property type="match status" value="1"/>
</dbReference>
<dbReference type="PANTHER" id="PTHR30489:SF0">
    <property type="entry name" value="LIPOPROTEIN-RELEASING SYSTEM TRANSMEMBRANE PROTEIN LOLE"/>
    <property type="match status" value="1"/>
</dbReference>
<dbReference type="Pfam" id="PF02687">
    <property type="entry name" value="FtsX"/>
    <property type="match status" value="1"/>
</dbReference>
<dbReference type="Pfam" id="PF12704">
    <property type="entry name" value="MacB_PCD"/>
    <property type="match status" value="1"/>
</dbReference>
<protein>
    <recommendedName>
        <fullName>Lipoprotein-releasing system transmembrane protein LolE</fullName>
    </recommendedName>
</protein>
<keyword id="KW-0997">Cell inner membrane</keyword>
<keyword id="KW-1003">Cell membrane</keyword>
<keyword id="KW-0472">Membrane</keyword>
<keyword id="KW-1185">Reference proteome</keyword>
<keyword id="KW-0812">Transmembrane</keyword>
<keyword id="KW-1133">Transmembrane helix</keyword>
<keyword id="KW-0813">Transport</keyword>
<gene>
    <name type="primary">lolE</name>
    <name type="ordered locus">HI_1548</name>
</gene>
<feature type="chain" id="PRO_0000201819" description="Lipoprotein-releasing system transmembrane protein LolE">
    <location>
        <begin position="1"/>
        <end position="416"/>
    </location>
</feature>
<feature type="transmembrane region" description="Helical" evidence="2">
    <location>
        <begin position="21"/>
        <end position="41"/>
    </location>
</feature>
<feature type="transmembrane region" description="Helical" evidence="2">
    <location>
        <begin position="276"/>
        <end position="296"/>
    </location>
</feature>
<feature type="transmembrane region" description="Helical" evidence="2">
    <location>
        <begin position="334"/>
        <end position="354"/>
    </location>
</feature>
<feature type="transmembrane region" description="Helical" evidence="2">
    <location>
        <begin position="379"/>
        <end position="399"/>
    </location>
</feature>
<proteinExistence type="inferred from homology"/>
<organism>
    <name type="scientific">Haemophilus influenzae (strain ATCC 51907 / DSM 11121 / KW20 / Rd)</name>
    <dbReference type="NCBI Taxonomy" id="71421"/>
    <lineage>
        <taxon>Bacteria</taxon>
        <taxon>Pseudomonadati</taxon>
        <taxon>Pseudomonadota</taxon>
        <taxon>Gammaproteobacteria</taxon>
        <taxon>Pasteurellales</taxon>
        <taxon>Pasteurellaceae</taxon>
        <taxon>Haemophilus</taxon>
    </lineage>
</organism>
<name>LOLE_HAEIN</name>
<comment type="function">
    <text evidence="1">Part of an ATP-dependent transport system LolCDE responsible for the release of lipoproteins targeted to the outer membrane from the inner membrane. Such a release is dependent of the sorting-signal (absence of an Asp at position 2 of the mature lipoprotein) and of LolA (By similarity).</text>
</comment>
<comment type="subcellular location">
    <subcellularLocation>
        <location evidence="1">Cell inner membrane</location>
        <topology evidence="1">Multi-pass membrane protein</topology>
    </subcellularLocation>
</comment>
<comment type="similarity">
    <text evidence="3">Belongs to the ABC-4 integral membrane protein family. LolC/E subfamily.</text>
</comment>
<evidence type="ECO:0000250" key="1"/>
<evidence type="ECO:0000255" key="2"/>
<evidence type="ECO:0000305" key="3"/>
<reference key="1">
    <citation type="journal article" date="1995" name="Science">
        <title>Whole-genome random sequencing and assembly of Haemophilus influenzae Rd.</title>
        <authorList>
            <person name="Fleischmann R.D."/>
            <person name="Adams M.D."/>
            <person name="White O."/>
            <person name="Clayton R.A."/>
            <person name="Kirkness E.F."/>
            <person name="Kerlavage A.R."/>
            <person name="Bult C.J."/>
            <person name="Tomb J.-F."/>
            <person name="Dougherty B.A."/>
            <person name="Merrick J.M."/>
            <person name="McKenney K."/>
            <person name="Sutton G.G."/>
            <person name="FitzHugh W."/>
            <person name="Fields C.A."/>
            <person name="Gocayne J.D."/>
            <person name="Scott J.D."/>
            <person name="Shirley R."/>
            <person name="Liu L.-I."/>
            <person name="Glodek A."/>
            <person name="Kelley J.M."/>
            <person name="Weidman J.F."/>
            <person name="Phillips C.A."/>
            <person name="Spriggs T."/>
            <person name="Hedblom E."/>
            <person name="Cotton M.D."/>
            <person name="Utterback T.R."/>
            <person name="Hanna M.C."/>
            <person name="Nguyen D.T."/>
            <person name="Saudek D.M."/>
            <person name="Brandon R.C."/>
            <person name="Fine L.D."/>
            <person name="Fritchman J.L."/>
            <person name="Fuhrmann J.L."/>
            <person name="Geoghagen N.S.M."/>
            <person name="Gnehm C.L."/>
            <person name="McDonald L.A."/>
            <person name="Small K.V."/>
            <person name="Fraser C.M."/>
            <person name="Smith H.O."/>
            <person name="Venter J.C."/>
        </authorList>
    </citation>
    <scope>NUCLEOTIDE SEQUENCE [LARGE SCALE GENOMIC DNA]</scope>
    <source>
        <strain>ATCC 51907 / DSM 11121 / KW20 / Rd</strain>
    </source>
</reference>